<sequence length="154" mass="17035">MAEAAQAPQQQFAIQRIYLKDVSFEAPSSPVMFQKEWNPDVKLDLDTQSRELGQGVYEVVLRLTVTVKNAEETAFLCEVQQAGIFSAEQMEAGQLAHCLGAFCPNILFPYARETISSLVVKGTFPQLNLAPVNFDALFMNYLQQQAQEGATANA</sequence>
<comment type="function">
    <text evidence="1">One of the proteins required for the normal export of preproteins out of the cell cytoplasm. It is a molecular chaperone that binds to a subset of precursor proteins, maintaining them in a translocation-competent state. It also specifically binds to its receptor SecA.</text>
</comment>
<comment type="subunit">
    <text evidence="1">Homotetramer, a dimer of dimers. One homotetramer interacts with 1 SecA dimer.</text>
</comment>
<comment type="subcellular location">
    <subcellularLocation>
        <location evidence="1">Cytoplasm</location>
    </subcellularLocation>
</comment>
<comment type="similarity">
    <text evidence="1">Belongs to the SecB family.</text>
</comment>
<evidence type="ECO:0000255" key="1">
    <source>
        <dbReference type="HAMAP-Rule" id="MF_00821"/>
    </source>
</evidence>
<feature type="chain" id="PRO_1000148711" description="Protein-export protein SecB">
    <location>
        <begin position="1"/>
        <end position="154"/>
    </location>
</feature>
<proteinExistence type="inferred from homology"/>
<accession>C3LRW4</accession>
<dbReference type="EMBL" id="CP001233">
    <property type="protein sequence ID" value="ACP06869.1"/>
    <property type="molecule type" value="Genomic_DNA"/>
</dbReference>
<dbReference type="RefSeq" id="WP_000796512.1">
    <property type="nucleotide sequence ID" value="NC_012578.1"/>
</dbReference>
<dbReference type="SMR" id="C3LRW4"/>
<dbReference type="GeneID" id="69718748"/>
<dbReference type="KEGG" id="vcm:VCM66_2573"/>
<dbReference type="HOGENOM" id="CLU_111574_1_0_6"/>
<dbReference type="Proteomes" id="UP000001217">
    <property type="component" value="Chromosome I"/>
</dbReference>
<dbReference type="GO" id="GO:0005737">
    <property type="term" value="C:cytoplasm"/>
    <property type="evidence" value="ECO:0007669"/>
    <property type="project" value="UniProtKB-SubCell"/>
</dbReference>
<dbReference type="GO" id="GO:0051082">
    <property type="term" value="F:unfolded protein binding"/>
    <property type="evidence" value="ECO:0007669"/>
    <property type="project" value="InterPro"/>
</dbReference>
<dbReference type="GO" id="GO:0006457">
    <property type="term" value="P:protein folding"/>
    <property type="evidence" value="ECO:0007669"/>
    <property type="project" value="UniProtKB-UniRule"/>
</dbReference>
<dbReference type="GO" id="GO:0051262">
    <property type="term" value="P:protein tetramerization"/>
    <property type="evidence" value="ECO:0007669"/>
    <property type="project" value="InterPro"/>
</dbReference>
<dbReference type="GO" id="GO:0015031">
    <property type="term" value="P:protein transport"/>
    <property type="evidence" value="ECO:0007669"/>
    <property type="project" value="UniProtKB-UniRule"/>
</dbReference>
<dbReference type="Gene3D" id="3.10.420.10">
    <property type="entry name" value="SecB-like"/>
    <property type="match status" value="1"/>
</dbReference>
<dbReference type="HAMAP" id="MF_00821">
    <property type="entry name" value="SecB"/>
    <property type="match status" value="1"/>
</dbReference>
<dbReference type="InterPro" id="IPR003708">
    <property type="entry name" value="SecB"/>
</dbReference>
<dbReference type="InterPro" id="IPR035958">
    <property type="entry name" value="SecB-like_sf"/>
</dbReference>
<dbReference type="NCBIfam" id="NF004393">
    <property type="entry name" value="PRK05751.1-4"/>
    <property type="match status" value="1"/>
</dbReference>
<dbReference type="NCBIfam" id="TIGR00809">
    <property type="entry name" value="secB"/>
    <property type="match status" value="1"/>
</dbReference>
<dbReference type="PANTHER" id="PTHR36918">
    <property type="match status" value="1"/>
</dbReference>
<dbReference type="PANTHER" id="PTHR36918:SF1">
    <property type="entry name" value="PROTEIN-EXPORT PROTEIN SECB"/>
    <property type="match status" value="1"/>
</dbReference>
<dbReference type="Pfam" id="PF02556">
    <property type="entry name" value="SecB"/>
    <property type="match status" value="1"/>
</dbReference>
<dbReference type="PRINTS" id="PR01594">
    <property type="entry name" value="SECBCHAPRONE"/>
</dbReference>
<dbReference type="SUPFAM" id="SSF54611">
    <property type="entry name" value="SecB-like"/>
    <property type="match status" value="1"/>
</dbReference>
<name>SECB_VIBCM</name>
<organism>
    <name type="scientific">Vibrio cholerae serotype O1 (strain M66-2)</name>
    <dbReference type="NCBI Taxonomy" id="579112"/>
    <lineage>
        <taxon>Bacteria</taxon>
        <taxon>Pseudomonadati</taxon>
        <taxon>Pseudomonadota</taxon>
        <taxon>Gammaproteobacteria</taxon>
        <taxon>Vibrionales</taxon>
        <taxon>Vibrionaceae</taxon>
        <taxon>Vibrio</taxon>
    </lineage>
</organism>
<keyword id="KW-0143">Chaperone</keyword>
<keyword id="KW-0963">Cytoplasm</keyword>
<keyword id="KW-0653">Protein transport</keyword>
<keyword id="KW-0811">Translocation</keyword>
<keyword id="KW-0813">Transport</keyword>
<protein>
    <recommendedName>
        <fullName evidence="1">Protein-export protein SecB</fullName>
    </recommendedName>
</protein>
<gene>
    <name evidence="1" type="primary">secB</name>
    <name type="ordered locus">VCM66_2573</name>
</gene>
<reference key="1">
    <citation type="journal article" date="2008" name="PLoS ONE">
        <title>A recalibrated molecular clock and independent origins for the cholera pandemic clones.</title>
        <authorList>
            <person name="Feng L."/>
            <person name="Reeves P.R."/>
            <person name="Lan R."/>
            <person name="Ren Y."/>
            <person name="Gao C."/>
            <person name="Zhou Z."/>
            <person name="Ren Y."/>
            <person name="Cheng J."/>
            <person name="Wang W."/>
            <person name="Wang J."/>
            <person name="Qian W."/>
            <person name="Li D."/>
            <person name="Wang L."/>
        </authorList>
    </citation>
    <scope>NUCLEOTIDE SEQUENCE [LARGE SCALE GENOMIC DNA]</scope>
    <source>
        <strain>M66-2</strain>
    </source>
</reference>